<reference key="1">
    <citation type="journal article" date="2006" name="Nature">
        <title>Insights from the genome of the biotrophic fungal plant pathogen Ustilago maydis.</title>
        <authorList>
            <person name="Kaemper J."/>
            <person name="Kahmann R."/>
            <person name="Boelker M."/>
            <person name="Ma L.-J."/>
            <person name="Brefort T."/>
            <person name="Saville B.J."/>
            <person name="Banuett F."/>
            <person name="Kronstad J.W."/>
            <person name="Gold S.E."/>
            <person name="Mueller O."/>
            <person name="Perlin M.H."/>
            <person name="Woesten H.A.B."/>
            <person name="de Vries R."/>
            <person name="Ruiz-Herrera J."/>
            <person name="Reynaga-Pena C.G."/>
            <person name="Snetselaar K."/>
            <person name="McCann M."/>
            <person name="Perez-Martin J."/>
            <person name="Feldbruegge M."/>
            <person name="Basse C.W."/>
            <person name="Steinberg G."/>
            <person name="Ibeas J.I."/>
            <person name="Holloman W."/>
            <person name="Guzman P."/>
            <person name="Farman M.L."/>
            <person name="Stajich J.E."/>
            <person name="Sentandreu R."/>
            <person name="Gonzalez-Prieto J.M."/>
            <person name="Kennell J.C."/>
            <person name="Molina L."/>
            <person name="Schirawski J."/>
            <person name="Mendoza-Mendoza A."/>
            <person name="Greilinger D."/>
            <person name="Muench K."/>
            <person name="Roessel N."/>
            <person name="Scherer M."/>
            <person name="Vranes M."/>
            <person name="Ladendorf O."/>
            <person name="Vincon V."/>
            <person name="Fuchs U."/>
            <person name="Sandrock B."/>
            <person name="Meng S."/>
            <person name="Ho E.C.H."/>
            <person name="Cahill M.J."/>
            <person name="Boyce K.J."/>
            <person name="Klose J."/>
            <person name="Klosterman S.J."/>
            <person name="Deelstra H.J."/>
            <person name="Ortiz-Castellanos L."/>
            <person name="Li W."/>
            <person name="Sanchez-Alonso P."/>
            <person name="Schreier P.H."/>
            <person name="Haeuser-Hahn I."/>
            <person name="Vaupel M."/>
            <person name="Koopmann E."/>
            <person name="Friedrich G."/>
            <person name="Voss H."/>
            <person name="Schlueter T."/>
            <person name="Margolis J."/>
            <person name="Platt D."/>
            <person name="Swimmer C."/>
            <person name="Gnirke A."/>
            <person name="Chen F."/>
            <person name="Vysotskaia V."/>
            <person name="Mannhaupt G."/>
            <person name="Gueldener U."/>
            <person name="Muensterkoetter M."/>
            <person name="Haase D."/>
            <person name="Oesterheld M."/>
            <person name="Mewes H.-W."/>
            <person name="Mauceli E.W."/>
            <person name="DeCaprio D."/>
            <person name="Wade C.M."/>
            <person name="Butler J."/>
            <person name="Young S.K."/>
            <person name="Jaffe D.B."/>
            <person name="Calvo S.E."/>
            <person name="Nusbaum C."/>
            <person name="Galagan J.E."/>
            <person name="Birren B.W."/>
        </authorList>
    </citation>
    <scope>NUCLEOTIDE SEQUENCE [LARGE SCALE GENOMIC DNA]</scope>
    <source>
        <strain>DSM 14603 / FGSC 9021 / UM521</strain>
    </source>
</reference>
<reference key="2">
    <citation type="submission" date="2014-09" db="EMBL/GenBank/DDBJ databases">
        <authorList>
            <person name="Gueldener U."/>
            <person name="Muensterkoetter M."/>
            <person name="Walter M.C."/>
            <person name="Mannhaupt G."/>
            <person name="Kahmann R."/>
        </authorList>
    </citation>
    <scope>GENOME REANNOTATION</scope>
    <source>
        <strain>DSM 14603 / FGSC 9021 / UM521</strain>
    </source>
</reference>
<gene>
    <name evidence="1" type="primary">ADK1</name>
    <name type="ORF">UMAG_02088</name>
</gene>
<proteinExistence type="inferred from homology"/>
<feature type="chain" id="PRO_0000365688" description="Adenylate kinase">
    <location>
        <begin position="1"/>
        <end position="299"/>
    </location>
</feature>
<feature type="region of interest" description="Disordered" evidence="2">
    <location>
        <begin position="1"/>
        <end position="30"/>
    </location>
</feature>
<feature type="region of interest" description="NMP" evidence="1">
    <location>
        <begin position="107"/>
        <end position="136"/>
    </location>
</feature>
<feature type="region of interest" description="LID" evidence="1">
    <location>
        <begin position="204"/>
        <end position="241"/>
    </location>
</feature>
<feature type="region of interest" description="Disordered" evidence="2">
    <location>
        <begin position="212"/>
        <end position="237"/>
    </location>
</feature>
<feature type="compositionally biased region" description="Basic and acidic residues" evidence="2">
    <location>
        <begin position="215"/>
        <end position="227"/>
    </location>
</feature>
<feature type="binding site" evidence="1">
    <location>
        <begin position="85"/>
        <end position="90"/>
    </location>
    <ligand>
        <name>ATP</name>
        <dbReference type="ChEBI" id="CHEBI:30616"/>
    </ligand>
</feature>
<feature type="binding site" evidence="1">
    <location>
        <position position="108"/>
    </location>
    <ligand>
        <name>AMP</name>
        <dbReference type="ChEBI" id="CHEBI:456215"/>
    </ligand>
</feature>
<feature type="binding site" evidence="1">
    <location>
        <position position="113"/>
    </location>
    <ligand>
        <name>AMP</name>
        <dbReference type="ChEBI" id="CHEBI:456215"/>
    </ligand>
</feature>
<feature type="binding site" evidence="1">
    <location>
        <begin position="134"/>
        <end position="136"/>
    </location>
    <ligand>
        <name>AMP</name>
        <dbReference type="ChEBI" id="CHEBI:456215"/>
    </ligand>
</feature>
<feature type="binding site" evidence="1">
    <location>
        <begin position="163"/>
        <end position="166"/>
    </location>
    <ligand>
        <name>AMP</name>
        <dbReference type="ChEBI" id="CHEBI:456215"/>
    </ligand>
</feature>
<feature type="binding site" evidence="1">
    <location>
        <position position="170"/>
    </location>
    <ligand>
        <name>AMP</name>
        <dbReference type="ChEBI" id="CHEBI:456215"/>
    </ligand>
</feature>
<feature type="binding site" evidence="1">
    <location>
        <position position="205"/>
    </location>
    <ligand>
        <name>ATP</name>
        <dbReference type="ChEBI" id="CHEBI:30616"/>
    </ligand>
</feature>
<feature type="binding site" evidence="1">
    <location>
        <begin position="214"/>
        <end position="215"/>
    </location>
    <ligand>
        <name>ATP</name>
        <dbReference type="ChEBI" id="CHEBI:30616"/>
    </ligand>
</feature>
<feature type="binding site" evidence="1">
    <location>
        <position position="238"/>
    </location>
    <ligand>
        <name>AMP</name>
        <dbReference type="ChEBI" id="CHEBI:456215"/>
    </ligand>
</feature>
<feature type="binding site" evidence="1">
    <location>
        <position position="249"/>
    </location>
    <ligand>
        <name>AMP</name>
        <dbReference type="ChEBI" id="CHEBI:456215"/>
    </ligand>
</feature>
<feature type="binding site" evidence="1">
    <location>
        <position position="277"/>
    </location>
    <ligand>
        <name>ATP</name>
        <dbReference type="ChEBI" id="CHEBI:30616"/>
    </ligand>
</feature>
<organism>
    <name type="scientific">Mycosarcoma maydis</name>
    <name type="common">Corn smut fungus</name>
    <name type="synonym">Ustilago maydis</name>
    <dbReference type="NCBI Taxonomy" id="5270"/>
    <lineage>
        <taxon>Eukaryota</taxon>
        <taxon>Fungi</taxon>
        <taxon>Dikarya</taxon>
        <taxon>Basidiomycota</taxon>
        <taxon>Ustilaginomycotina</taxon>
        <taxon>Ustilaginomycetes</taxon>
        <taxon>Ustilaginales</taxon>
        <taxon>Ustilaginaceae</taxon>
        <taxon>Mycosarcoma</taxon>
    </lineage>
</organism>
<dbReference type="EC" id="2.7.4.3" evidence="1"/>
<dbReference type="EMBL" id="CM003144">
    <property type="protein sequence ID" value="KIS69550.1"/>
    <property type="molecule type" value="Genomic_DNA"/>
</dbReference>
<dbReference type="RefSeq" id="XP_011388457.1">
    <property type="nucleotide sequence ID" value="XM_011390155.1"/>
</dbReference>
<dbReference type="SMR" id="Q4PCS5"/>
<dbReference type="FunCoup" id="Q4PCS5">
    <property type="interactions" value="489"/>
</dbReference>
<dbReference type="STRING" id="237631.Q4PCS5"/>
<dbReference type="EnsemblFungi" id="KIS69550">
    <property type="protein sequence ID" value="KIS69550"/>
    <property type="gene ID" value="UMAG_02088"/>
</dbReference>
<dbReference type="GeneID" id="23562916"/>
<dbReference type="KEGG" id="uma:UMAG_02088"/>
<dbReference type="VEuPathDB" id="FungiDB:UMAG_02088"/>
<dbReference type="eggNOG" id="KOG3078">
    <property type="taxonomic scope" value="Eukaryota"/>
</dbReference>
<dbReference type="InParanoid" id="Q4PCS5"/>
<dbReference type="OMA" id="VYHEQTA"/>
<dbReference type="OrthoDB" id="439792at2759"/>
<dbReference type="Proteomes" id="UP000000561">
    <property type="component" value="Chromosome 5"/>
</dbReference>
<dbReference type="GO" id="GO:0005737">
    <property type="term" value="C:cytoplasm"/>
    <property type="evidence" value="ECO:0000318"/>
    <property type="project" value="GO_Central"/>
</dbReference>
<dbReference type="GO" id="GO:0005829">
    <property type="term" value="C:cytosol"/>
    <property type="evidence" value="ECO:0007669"/>
    <property type="project" value="UniProtKB-SubCell"/>
</dbReference>
<dbReference type="GO" id="GO:0005758">
    <property type="term" value="C:mitochondrial intermembrane space"/>
    <property type="evidence" value="ECO:0007669"/>
    <property type="project" value="UniProtKB-SubCell"/>
</dbReference>
<dbReference type="GO" id="GO:0005739">
    <property type="term" value="C:mitochondrion"/>
    <property type="evidence" value="ECO:0000318"/>
    <property type="project" value="GO_Central"/>
</dbReference>
<dbReference type="GO" id="GO:0004017">
    <property type="term" value="F:adenylate kinase activity"/>
    <property type="evidence" value="ECO:0000318"/>
    <property type="project" value="GO_Central"/>
</dbReference>
<dbReference type="GO" id="GO:0016208">
    <property type="term" value="F:AMP binding"/>
    <property type="evidence" value="ECO:0007669"/>
    <property type="project" value="EnsemblFungi"/>
</dbReference>
<dbReference type="GO" id="GO:0005524">
    <property type="term" value="F:ATP binding"/>
    <property type="evidence" value="ECO:0007669"/>
    <property type="project" value="UniProtKB-KW"/>
</dbReference>
<dbReference type="GO" id="GO:0003688">
    <property type="term" value="F:DNA replication origin binding"/>
    <property type="evidence" value="ECO:0007669"/>
    <property type="project" value="EnsemblFungi"/>
</dbReference>
<dbReference type="GO" id="GO:0006172">
    <property type="term" value="P:ADP biosynthetic process"/>
    <property type="evidence" value="ECO:0000318"/>
    <property type="project" value="GO_Central"/>
</dbReference>
<dbReference type="GO" id="GO:0046033">
    <property type="term" value="P:AMP metabolic process"/>
    <property type="evidence" value="ECO:0007669"/>
    <property type="project" value="UniProtKB-UniRule"/>
</dbReference>
<dbReference type="GO" id="GO:0046034">
    <property type="term" value="P:ATP metabolic process"/>
    <property type="evidence" value="ECO:0007669"/>
    <property type="project" value="UniProtKB-UniRule"/>
</dbReference>
<dbReference type="GO" id="GO:0006270">
    <property type="term" value="P:DNA replication initiation"/>
    <property type="evidence" value="ECO:0007669"/>
    <property type="project" value="EnsemblFungi"/>
</dbReference>
<dbReference type="GO" id="GO:0036388">
    <property type="term" value="P:pre-replicative complex assembly"/>
    <property type="evidence" value="ECO:0007669"/>
    <property type="project" value="EnsemblFungi"/>
</dbReference>
<dbReference type="CDD" id="cd01428">
    <property type="entry name" value="ADK"/>
    <property type="match status" value="1"/>
</dbReference>
<dbReference type="FunFam" id="3.40.50.300:FF:000106">
    <property type="entry name" value="Adenylate kinase mitochondrial"/>
    <property type="match status" value="1"/>
</dbReference>
<dbReference type="Gene3D" id="3.40.50.300">
    <property type="entry name" value="P-loop containing nucleotide triphosphate hydrolases"/>
    <property type="match status" value="1"/>
</dbReference>
<dbReference type="HAMAP" id="MF_00235">
    <property type="entry name" value="Adenylate_kinase_Adk"/>
    <property type="match status" value="1"/>
</dbReference>
<dbReference type="HAMAP" id="MF_03168">
    <property type="entry name" value="Adenylate_kinase_AK2"/>
    <property type="match status" value="1"/>
</dbReference>
<dbReference type="InterPro" id="IPR006259">
    <property type="entry name" value="Adenyl_kin_sub"/>
</dbReference>
<dbReference type="InterPro" id="IPR000850">
    <property type="entry name" value="Adenylat/UMP-CMP_kin"/>
</dbReference>
<dbReference type="InterPro" id="IPR033690">
    <property type="entry name" value="Adenylat_kinase_CS"/>
</dbReference>
<dbReference type="InterPro" id="IPR007862">
    <property type="entry name" value="Adenylate_kinase_lid-dom"/>
</dbReference>
<dbReference type="InterPro" id="IPR028587">
    <property type="entry name" value="AK2"/>
</dbReference>
<dbReference type="InterPro" id="IPR027417">
    <property type="entry name" value="P-loop_NTPase"/>
</dbReference>
<dbReference type="NCBIfam" id="TIGR01351">
    <property type="entry name" value="adk"/>
    <property type="match status" value="1"/>
</dbReference>
<dbReference type="NCBIfam" id="NF001381">
    <property type="entry name" value="PRK00279.1-3"/>
    <property type="match status" value="1"/>
</dbReference>
<dbReference type="NCBIfam" id="NF011100">
    <property type="entry name" value="PRK14527.1"/>
    <property type="match status" value="1"/>
</dbReference>
<dbReference type="PANTHER" id="PTHR23359">
    <property type="entry name" value="NUCLEOTIDE KINASE"/>
    <property type="match status" value="1"/>
</dbReference>
<dbReference type="Pfam" id="PF00406">
    <property type="entry name" value="ADK"/>
    <property type="match status" value="1"/>
</dbReference>
<dbReference type="Pfam" id="PF05191">
    <property type="entry name" value="ADK_lid"/>
    <property type="match status" value="1"/>
</dbReference>
<dbReference type="PRINTS" id="PR00094">
    <property type="entry name" value="ADENYLTKNASE"/>
</dbReference>
<dbReference type="SUPFAM" id="SSF52540">
    <property type="entry name" value="P-loop containing nucleoside triphosphate hydrolases"/>
    <property type="match status" value="1"/>
</dbReference>
<dbReference type="PROSITE" id="PS00113">
    <property type="entry name" value="ADENYLATE_KINASE"/>
    <property type="match status" value="1"/>
</dbReference>
<evidence type="ECO:0000255" key="1">
    <source>
        <dbReference type="HAMAP-Rule" id="MF_03168"/>
    </source>
</evidence>
<evidence type="ECO:0000256" key="2">
    <source>
        <dbReference type="SAM" id="MobiDB-lite"/>
    </source>
</evidence>
<accession>Q4PCS5</accession>
<accession>A0A0D1E5B9</accession>
<keyword id="KW-0067">ATP-binding</keyword>
<keyword id="KW-0963">Cytoplasm</keyword>
<keyword id="KW-0418">Kinase</keyword>
<keyword id="KW-0496">Mitochondrion</keyword>
<keyword id="KW-0547">Nucleotide-binding</keyword>
<keyword id="KW-1185">Reference proteome</keyword>
<keyword id="KW-0808">Transferase</keyword>
<protein>
    <recommendedName>
        <fullName evidence="1">Adenylate kinase</fullName>
        <ecNumber evidence="1">2.7.4.3</ecNumber>
    </recommendedName>
    <alternativeName>
        <fullName evidence="1">ATP-AMP transphosphorylase</fullName>
    </alternativeName>
    <alternativeName>
        <fullName evidence="1">ATP:AMP phosphotransferase</fullName>
    </alternativeName>
    <alternativeName>
        <fullName evidence="1">Adenylate kinase cytosolic and mitochondrial</fullName>
    </alternativeName>
    <alternativeName>
        <fullName evidence="1">Adenylate monophosphate kinase</fullName>
    </alternativeName>
</protein>
<sequence>MATTTTRGARDSPFPAPSEGEIKKELNMKGDTISGGSTELSYLKSLVSQLNDKIAQLESKASSTISSITGSTPSGVRMILIGPPGAGKGTQAPKILEKFNNCVCHLATGDMLREQVSKQTELGKMAKKIMDQGGLVSDEIMVSMIKDQLETNPSCKGGFILDGFPRTTPQAEKLDGMLKQKNQKLDHAVELKINDNLLISRITGRLVHPASGRSYHKEFSPPKKPMTDDVTGEPLIQRSDDNAETLKKRLATYHAQTAAVTDYYRKQGIWAPVDASQSPKVVWQSIQAIFDNKQPQPSN</sequence>
<name>KAD2_MYCMD</name>
<comment type="function">
    <text evidence="1">Catalyzes the reversible transfer of the terminal phosphate group between ATP and AMP. Plays an important role in cellular energy homeostasis and in adenine nucleotide metabolism. Adenylate kinase activity is critical for regulation of the phosphate utilization and the AMP de novo biosynthesis pathways.</text>
</comment>
<comment type="catalytic activity">
    <reaction evidence="1">
        <text>AMP + ATP = 2 ADP</text>
        <dbReference type="Rhea" id="RHEA:12973"/>
        <dbReference type="ChEBI" id="CHEBI:30616"/>
        <dbReference type="ChEBI" id="CHEBI:456215"/>
        <dbReference type="ChEBI" id="CHEBI:456216"/>
        <dbReference type="EC" id="2.7.4.3"/>
    </reaction>
</comment>
<comment type="subunit">
    <text evidence="1">Monomer.</text>
</comment>
<comment type="subcellular location">
    <subcellularLocation>
        <location evidence="1">Cytoplasm</location>
        <location evidence="1">Cytosol</location>
    </subcellularLocation>
    <subcellularLocation>
        <location evidence="1">Mitochondrion intermembrane space</location>
    </subcellularLocation>
    <text evidence="1">Predominantly mitochondrial.</text>
</comment>
<comment type="domain">
    <text evidence="1">Consists of three domains, a large central CORE domain and two small peripheral domains, NMPbind and LID, which undergo movements during catalysis. The LID domain closes over the site of phosphoryl transfer upon ATP binding. Assembling and dissambling the active center during each catalytic cycle provides an effective means to prevent ATP hydrolysis.</text>
</comment>
<comment type="similarity">
    <text evidence="1">Belongs to the adenylate kinase family. AK2 subfamily.</text>
</comment>